<comment type="function">
    <text evidence="1">Co-chaperone involved in the maturation of iron-sulfur cluster-containing proteins. Seems to help targeting proteins to be folded toward HscA.</text>
</comment>
<comment type="subunit">
    <text evidence="1">Interacts with HscA and stimulates its ATPase activity.</text>
</comment>
<comment type="similarity">
    <text evidence="1">Belongs to the HscB family.</text>
</comment>
<dbReference type="EMBL" id="AE014299">
    <property type="protein sequence ID" value="AAN55307.1"/>
    <property type="molecule type" value="Genomic_DNA"/>
</dbReference>
<dbReference type="RefSeq" id="NP_717863.1">
    <property type="nucleotide sequence ID" value="NC_004347.2"/>
</dbReference>
<dbReference type="RefSeq" id="WP_011072279.1">
    <property type="nucleotide sequence ID" value="NC_004347.2"/>
</dbReference>
<dbReference type="SMR" id="Q8EEU6"/>
<dbReference type="STRING" id="211586.SO_2267"/>
<dbReference type="PaxDb" id="211586-SO_2267"/>
<dbReference type="KEGG" id="son:SO_2267"/>
<dbReference type="PATRIC" id="fig|211586.12.peg.2183"/>
<dbReference type="eggNOG" id="COG1076">
    <property type="taxonomic scope" value="Bacteria"/>
</dbReference>
<dbReference type="HOGENOM" id="CLU_068529_2_0_6"/>
<dbReference type="OrthoDB" id="287587at2"/>
<dbReference type="PhylomeDB" id="Q8EEU6"/>
<dbReference type="BioCyc" id="SONE211586:G1GMP-2071-MONOMER"/>
<dbReference type="Proteomes" id="UP000008186">
    <property type="component" value="Chromosome"/>
</dbReference>
<dbReference type="GO" id="GO:1990230">
    <property type="term" value="C:iron-sulfur cluster transfer complex"/>
    <property type="evidence" value="ECO:0000318"/>
    <property type="project" value="GO_Central"/>
</dbReference>
<dbReference type="GO" id="GO:0001671">
    <property type="term" value="F:ATPase activator activity"/>
    <property type="evidence" value="ECO:0007669"/>
    <property type="project" value="InterPro"/>
</dbReference>
<dbReference type="GO" id="GO:0051087">
    <property type="term" value="F:protein-folding chaperone binding"/>
    <property type="evidence" value="ECO:0007669"/>
    <property type="project" value="InterPro"/>
</dbReference>
<dbReference type="GO" id="GO:0044571">
    <property type="term" value="P:[2Fe-2S] cluster assembly"/>
    <property type="evidence" value="ECO:0007669"/>
    <property type="project" value="InterPro"/>
</dbReference>
<dbReference type="GO" id="GO:0051259">
    <property type="term" value="P:protein complex oligomerization"/>
    <property type="evidence" value="ECO:0007669"/>
    <property type="project" value="InterPro"/>
</dbReference>
<dbReference type="GO" id="GO:0006457">
    <property type="term" value="P:protein folding"/>
    <property type="evidence" value="ECO:0007669"/>
    <property type="project" value="UniProtKB-UniRule"/>
</dbReference>
<dbReference type="CDD" id="cd06257">
    <property type="entry name" value="DnaJ"/>
    <property type="match status" value="1"/>
</dbReference>
<dbReference type="FunFam" id="1.10.287.110:FF:000008">
    <property type="entry name" value="Co-chaperone protein HscB"/>
    <property type="match status" value="1"/>
</dbReference>
<dbReference type="FunFam" id="1.20.1280.20:FF:000005">
    <property type="entry name" value="Co-chaperone protein HscB homolog"/>
    <property type="match status" value="1"/>
</dbReference>
<dbReference type="Gene3D" id="1.10.287.110">
    <property type="entry name" value="DnaJ domain"/>
    <property type="match status" value="1"/>
</dbReference>
<dbReference type="Gene3D" id="1.20.1280.20">
    <property type="entry name" value="HscB, C-terminal domain"/>
    <property type="match status" value="1"/>
</dbReference>
<dbReference type="HAMAP" id="MF_00682">
    <property type="entry name" value="HscB"/>
    <property type="match status" value="1"/>
</dbReference>
<dbReference type="InterPro" id="IPR001623">
    <property type="entry name" value="DnaJ_domain"/>
</dbReference>
<dbReference type="InterPro" id="IPR004640">
    <property type="entry name" value="HscB"/>
</dbReference>
<dbReference type="InterPro" id="IPR036386">
    <property type="entry name" value="HscB_C_sf"/>
</dbReference>
<dbReference type="InterPro" id="IPR009073">
    <property type="entry name" value="HscB_oligo_C"/>
</dbReference>
<dbReference type="InterPro" id="IPR036869">
    <property type="entry name" value="J_dom_sf"/>
</dbReference>
<dbReference type="NCBIfam" id="TIGR00714">
    <property type="entry name" value="hscB"/>
    <property type="match status" value="1"/>
</dbReference>
<dbReference type="NCBIfam" id="NF003449">
    <property type="entry name" value="PRK05014.1"/>
    <property type="match status" value="1"/>
</dbReference>
<dbReference type="PANTHER" id="PTHR14021">
    <property type="entry name" value="IRON-SULFUR CLUSTER CO-CHAPERONE PROTEIN HSCB"/>
    <property type="match status" value="1"/>
</dbReference>
<dbReference type="PANTHER" id="PTHR14021:SF15">
    <property type="entry name" value="IRON-SULFUR CLUSTER CO-CHAPERONE PROTEIN HSCB"/>
    <property type="match status" value="1"/>
</dbReference>
<dbReference type="Pfam" id="PF07743">
    <property type="entry name" value="HSCB_C"/>
    <property type="match status" value="1"/>
</dbReference>
<dbReference type="SMART" id="SM00271">
    <property type="entry name" value="DnaJ"/>
    <property type="match status" value="1"/>
</dbReference>
<dbReference type="SUPFAM" id="SSF46565">
    <property type="entry name" value="Chaperone J-domain"/>
    <property type="match status" value="1"/>
</dbReference>
<dbReference type="SUPFAM" id="SSF47144">
    <property type="entry name" value="HSC20 (HSCB), C-terminal oligomerisation domain"/>
    <property type="match status" value="1"/>
</dbReference>
<dbReference type="PROSITE" id="PS50076">
    <property type="entry name" value="DNAJ_2"/>
    <property type="match status" value="1"/>
</dbReference>
<keyword id="KW-0143">Chaperone</keyword>
<keyword id="KW-1185">Reference proteome</keyword>
<name>HSCB_SHEON</name>
<gene>
    <name evidence="1" type="primary">hscB</name>
    <name type="ordered locus">SO_2267</name>
</gene>
<proteinExistence type="inferred from homology"/>
<evidence type="ECO:0000255" key="1">
    <source>
        <dbReference type="HAMAP-Rule" id="MF_00682"/>
    </source>
</evidence>
<protein>
    <recommendedName>
        <fullName evidence="1">Co-chaperone protein HscB homolog</fullName>
    </recommendedName>
</protein>
<sequence length="174" mass="20194">MNYFELFKFPPTFDIDTAVLADRYRELQRAVHPDKFANDTEQQRLLSVQRTAQVNDGYQTLKDPIRRAEHMLSLRGIDLSHETTTVKDTAFLMQQMEWREALEDIRESIDHQAIINELYDSFAAYRLKLTKLLAAQLSSGSDEDALLAADQVRKLKFMAKLQDELTRIEDALLD</sequence>
<accession>Q8EEU6</accession>
<feature type="chain" id="PRO_0000070990" description="Co-chaperone protein HscB homolog">
    <location>
        <begin position="1"/>
        <end position="174"/>
    </location>
</feature>
<feature type="domain" description="J" evidence="1">
    <location>
        <begin position="2"/>
        <end position="74"/>
    </location>
</feature>
<organism>
    <name type="scientific">Shewanella oneidensis (strain ATCC 700550 / JCM 31522 / CIP 106686 / LMG 19005 / NCIMB 14063 / MR-1)</name>
    <dbReference type="NCBI Taxonomy" id="211586"/>
    <lineage>
        <taxon>Bacteria</taxon>
        <taxon>Pseudomonadati</taxon>
        <taxon>Pseudomonadota</taxon>
        <taxon>Gammaproteobacteria</taxon>
        <taxon>Alteromonadales</taxon>
        <taxon>Shewanellaceae</taxon>
        <taxon>Shewanella</taxon>
    </lineage>
</organism>
<reference key="1">
    <citation type="journal article" date="2002" name="Nat. Biotechnol.">
        <title>Genome sequence of the dissimilatory metal ion-reducing bacterium Shewanella oneidensis.</title>
        <authorList>
            <person name="Heidelberg J.F."/>
            <person name="Paulsen I.T."/>
            <person name="Nelson K.E."/>
            <person name="Gaidos E.J."/>
            <person name="Nelson W.C."/>
            <person name="Read T.D."/>
            <person name="Eisen J.A."/>
            <person name="Seshadri R."/>
            <person name="Ward N.L."/>
            <person name="Methe B.A."/>
            <person name="Clayton R.A."/>
            <person name="Meyer T."/>
            <person name="Tsapin A."/>
            <person name="Scott J."/>
            <person name="Beanan M.J."/>
            <person name="Brinkac L.M."/>
            <person name="Daugherty S.C."/>
            <person name="DeBoy R.T."/>
            <person name="Dodson R.J."/>
            <person name="Durkin A.S."/>
            <person name="Haft D.H."/>
            <person name="Kolonay J.F."/>
            <person name="Madupu R."/>
            <person name="Peterson J.D."/>
            <person name="Umayam L.A."/>
            <person name="White O."/>
            <person name="Wolf A.M."/>
            <person name="Vamathevan J.J."/>
            <person name="Weidman J.F."/>
            <person name="Impraim M."/>
            <person name="Lee K."/>
            <person name="Berry K.J."/>
            <person name="Lee C."/>
            <person name="Mueller J."/>
            <person name="Khouri H.M."/>
            <person name="Gill J."/>
            <person name="Utterback T.R."/>
            <person name="McDonald L.A."/>
            <person name="Feldblyum T.V."/>
            <person name="Smith H.O."/>
            <person name="Venter J.C."/>
            <person name="Nealson K.H."/>
            <person name="Fraser C.M."/>
        </authorList>
    </citation>
    <scope>NUCLEOTIDE SEQUENCE [LARGE SCALE GENOMIC DNA]</scope>
    <source>
        <strain>ATCC 700550 / JCM 31522 / CIP 106686 / LMG 19005 / NCIMB 14063 / MR-1</strain>
    </source>
</reference>